<evidence type="ECO:0000255" key="1">
    <source>
        <dbReference type="HAMAP-Rule" id="MF_01855"/>
    </source>
</evidence>
<gene>
    <name evidence="1" type="primary">fbp</name>
    <name type="ordered locus">Ajs_2760</name>
</gene>
<comment type="catalytic activity">
    <reaction evidence="1">
        <text>beta-D-fructose 1,6-bisphosphate + H2O = beta-D-fructose 6-phosphate + phosphate</text>
        <dbReference type="Rhea" id="RHEA:11064"/>
        <dbReference type="ChEBI" id="CHEBI:15377"/>
        <dbReference type="ChEBI" id="CHEBI:32966"/>
        <dbReference type="ChEBI" id="CHEBI:43474"/>
        <dbReference type="ChEBI" id="CHEBI:57634"/>
        <dbReference type="EC" id="3.1.3.11"/>
    </reaction>
</comment>
<comment type="cofactor">
    <cofactor evidence="1">
        <name>Mg(2+)</name>
        <dbReference type="ChEBI" id="CHEBI:18420"/>
    </cofactor>
    <text evidence="1">Binds 2 magnesium ions per subunit.</text>
</comment>
<comment type="pathway">
    <text evidence="1">Carbohydrate biosynthesis; gluconeogenesis.</text>
</comment>
<comment type="subunit">
    <text evidence="1">Homotetramer.</text>
</comment>
<comment type="subcellular location">
    <subcellularLocation>
        <location evidence="1">Cytoplasm</location>
    </subcellularLocation>
</comment>
<comment type="similarity">
    <text evidence="1">Belongs to the FBPase class 1 family.</text>
</comment>
<proteinExistence type="inferred from homology"/>
<name>F16PA_ACISJ</name>
<dbReference type="EC" id="3.1.3.11" evidence="1"/>
<dbReference type="EMBL" id="CP000539">
    <property type="protein sequence ID" value="ABM42901.1"/>
    <property type="molecule type" value="Genomic_DNA"/>
</dbReference>
<dbReference type="SMR" id="A1W9H6"/>
<dbReference type="STRING" id="232721.Ajs_2760"/>
<dbReference type="KEGG" id="ajs:Ajs_2760"/>
<dbReference type="eggNOG" id="COG0158">
    <property type="taxonomic scope" value="Bacteria"/>
</dbReference>
<dbReference type="HOGENOM" id="CLU_039977_0_0_4"/>
<dbReference type="UniPathway" id="UPA00138"/>
<dbReference type="Proteomes" id="UP000000645">
    <property type="component" value="Chromosome"/>
</dbReference>
<dbReference type="GO" id="GO:0005829">
    <property type="term" value="C:cytosol"/>
    <property type="evidence" value="ECO:0007669"/>
    <property type="project" value="TreeGrafter"/>
</dbReference>
<dbReference type="GO" id="GO:0042132">
    <property type="term" value="F:fructose 1,6-bisphosphate 1-phosphatase activity"/>
    <property type="evidence" value="ECO:0007669"/>
    <property type="project" value="UniProtKB-UniRule"/>
</dbReference>
<dbReference type="GO" id="GO:0000287">
    <property type="term" value="F:magnesium ion binding"/>
    <property type="evidence" value="ECO:0007669"/>
    <property type="project" value="UniProtKB-UniRule"/>
</dbReference>
<dbReference type="GO" id="GO:0030388">
    <property type="term" value="P:fructose 1,6-bisphosphate metabolic process"/>
    <property type="evidence" value="ECO:0007669"/>
    <property type="project" value="TreeGrafter"/>
</dbReference>
<dbReference type="GO" id="GO:0006002">
    <property type="term" value="P:fructose 6-phosphate metabolic process"/>
    <property type="evidence" value="ECO:0007669"/>
    <property type="project" value="TreeGrafter"/>
</dbReference>
<dbReference type="GO" id="GO:0006000">
    <property type="term" value="P:fructose metabolic process"/>
    <property type="evidence" value="ECO:0007669"/>
    <property type="project" value="TreeGrafter"/>
</dbReference>
<dbReference type="GO" id="GO:0006094">
    <property type="term" value="P:gluconeogenesis"/>
    <property type="evidence" value="ECO:0007669"/>
    <property type="project" value="UniProtKB-UniRule"/>
</dbReference>
<dbReference type="GO" id="GO:0005986">
    <property type="term" value="P:sucrose biosynthetic process"/>
    <property type="evidence" value="ECO:0007669"/>
    <property type="project" value="TreeGrafter"/>
</dbReference>
<dbReference type="CDD" id="cd00354">
    <property type="entry name" value="FBPase"/>
    <property type="match status" value="1"/>
</dbReference>
<dbReference type="FunFam" id="3.30.540.10:FF:000006">
    <property type="entry name" value="Fructose-1,6-bisphosphatase class 1"/>
    <property type="match status" value="1"/>
</dbReference>
<dbReference type="FunFam" id="3.40.190.80:FF:000011">
    <property type="entry name" value="Fructose-1,6-bisphosphatase class 1"/>
    <property type="match status" value="1"/>
</dbReference>
<dbReference type="Gene3D" id="3.40.190.80">
    <property type="match status" value="1"/>
</dbReference>
<dbReference type="Gene3D" id="3.30.540.10">
    <property type="entry name" value="Fructose-1,6-Bisphosphatase, subunit A, domain 1"/>
    <property type="match status" value="1"/>
</dbReference>
<dbReference type="HAMAP" id="MF_01855">
    <property type="entry name" value="FBPase_class1"/>
    <property type="match status" value="1"/>
</dbReference>
<dbReference type="InterPro" id="IPR044015">
    <property type="entry name" value="FBPase_C_dom"/>
</dbReference>
<dbReference type="InterPro" id="IPR000146">
    <property type="entry name" value="FBPase_class-1"/>
</dbReference>
<dbReference type="InterPro" id="IPR033391">
    <property type="entry name" value="FBPase_N"/>
</dbReference>
<dbReference type="InterPro" id="IPR028343">
    <property type="entry name" value="FBPtase"/>
</dbReference>
<dbReference type="NCBIfam" id="NF006778">
    <property type="entry name" value="PRK09293.1-1"/>
    <property type="match status" value="1"/>
</dbReference>
<dbReference type="NCBIfam" id="NF006779">
    <property type="entry name" value="PRK09293.1-3"/>
    <property type="match status" value="1"/>
</dbReference>
<dbReference type="NCBIfam" id="NF006780">
    <property type="entry name" value="PRK09293.1-4"/>
    <property type="match status" value="1"/>
</dbReference>
<dbReference type="PANTHER" id="PTHR11556">
    <property type="entry name" value="FRUCTOSE-1,6-BISPHOSPHATASE-RELATED"/>
    <property type="match status" value="1"/>
</dbReference>
<dbReference type="PANTHER" id="PTHR11556:SF35">
    <property type="entry name" value="SEDOHEPTULOSE-1,7-BISPHOSPHATASE, CHLOROPLASTIC"/>
    <property type="match status" value="1"/>
</dbReference>
<dbReference type="Pfam" id="PF00316">
    <property type="entry name" value="FBPase"/>
    <property type="match status" value="1"/>
</dbReference>
<dbReference type="Pfam" id="PF18913">
    <property type="entry name" value="FBPase_C"/>
    <property type="match status" value="1"/>
</dbReference>
<dbReference type="PIRSF" id="PIRSF500210">
    <property type="entry name" value="FBPtase"/>
    <property type="match status" value="1"/>
</dbReference>
<dbReference type="PIRSF" id="PIRSF000904">
    <property type="entry name" value="FBPtase_SBPase"/>
    <property type="match status" value="1"/>
</dbReference>
<dbReference type="PRINTS" id="PR00115">
    <property type="entry name" value="F16BPHPHTASE"/>
</dbReference>
<dbReference type="SUPFAM" id="SSF56655">
    <property type="entry name" value="Carbohydrate phosphatase"/>
    <property type="match status" value="1"/>
</dbReference>
<sequence length="339" mass="38014">MTERISLTRYLVEQQRVHGRIPPQLRLLVEVVARACKRISFAVNKGDLGDVMGTAGTENVQGEVQKKLDIIANEVLIEANEWGGHLAAMASEEMDGIYVVPNRFPQGEHLLMFDPLDGSSNIDVNVSIGTIFSVLHKHHDDPTTDEPVTEADFLQPGHQQVAAGYCIYGPQTTLVLTVGDGVAMFTLDREQGSFVLTRENIRIPEDTKEFAINMSNMRHWDAPVRRYIDECLQGKEGPRGKDFNMRWIASMVADVHRILMRGGIFMYPWDKREPNKPGKLRLMYEANPMGWLVEQAGGAATNGRQRILDIQPAQLHERVSVILGSKNEVDRVTSYHSGI</sequence>
<organism>
    <name type="scientific">Acidovorax sp. (strain JS42)</name>
    <dbReference type="NCBI Taxonomy" id="232721"/>
    <lineage>
        <taxon>Bacteria</taxon>
        <taxon>Pseudomonadati</taxon>
        <taxon>Pseudomonadota</taxon>
        <taxon>Betaproteobacteria</taxon>
        <taxon>Burkholderiales</taxon>
        <taxon>Comamonadaceae</taxon>
        <taxon>Acidovorax</taxon>
    </lineage>
</organism>
<feature type="chain" id="PRO_0000364446" description="Fructose-1,6-bisphosphatase class 1">
    <location>
        <begin position="1"/>
        <end position="339"/>
    </location>
</feature>
<feature type="binding site" evidence="1">
    <location>
        <position position="92"/>
    </location>
    <ligand>
        <name>Mg(2+)</name>
        <dbReference type="ChEBI" id="CHEBI:18420"/>
        <label>1</label>
    </ligand>
</feature>
<feature type="binding site" evidence="1">
    <location>
        <position position="114"/>
    </location>
    <ligand>
        <name>Mg(2+)</name>
        <dbReference type="ChEBI" id="CHEBI:18420"/>
        <label>1</label>
    </ligand>
</feature>
<feature type="binding site" evidence="1">
    <location>
        <position position="114"/>
    </location>
    <ligand>
        <name>Mg(2+)</name>
        <dbReference type="ChEBI" id="CHEBI:18420"/>
        <label>2</label>
    </ligand>
</feature>
<feature type="binding site" evidence="1">
    <location>
        <position position="116"/>
    </location>
    <ligand>
        <name>Mg(2+)</name>
        <dbReference type="ChEBI" id="CHEBI:18420"/>
        <label>1</label>
    </ligand>
</feature>
<feature type="binding site" evidence="1">
    <location>
        <begin position="117"/>
        <end position="120"/>
    </location>
    <ligand>
        <name>substrate</name>
    </ligand>
</feature>
<feature type="binding site" evidence="1">
    <location>
        <position position="117"/>
    </location>
    <ligand>
        <name>Mg(2+)</name>
        <dbReference type="ChEBI" id="CHEBI:18420"/>
        <label>2</label>
    </ligand>
</feature>
<feature type="binding site" evidence="1">
    <location>
        <position position="213"/>
    </location>
    <ligand>
        <name>substrate</name>
    </ligand>
</feature>
<feature type="binding site" evidence="1">
    <location>
        <position position="279"/>
    </location>
    <ligand>
        <name>substrate</name>
    </ligand>
</feature>
<feature type="binding site" evidence="1">
    <location>
        <position position="285"/>
    </location>
    <ligand>
        <name>Mg(2+)</name>
        <dbReference type="ChEBI" id="CHEBI:18420"/>
        <label>2</label>
    </ligand>
</feature>
<reference key="1">
    <citation type="submission" date="2006-12" db="EMBL/GenBank/DDBJ databases">
        <title>Complete sequence of chromosome 1 of Acidovorax sp. JS42.</title>
        <authorList>
            <person name="Copeland A."/>
            <person name="Lucas S."/>
            <person name="Lapidus A."/>
            <person name="Barry K."/>
            <person name="Detter J.C."/>
            <person name="Glavina del Rio T."/>
            <person name="Dalin E."/>
            <person name="Tice H."/>
            <person name="Pitluck S."/>
            <person name="Chertkov O."/>
            <person name="Brettin T."/>
            <person name="Bruce D."/>
            <person name="Han C."/>
            <person name="Tapia R."/>
            <person name="Gilna P."/>
            <person name="Schmutz J."/>
            <person name="Larimer F."/>
            <person name="Land M."/>
            <person name="Hauser L."/>
            <person name="Kyrpides N."/>
            <person name="Kim E."/>
            <person name="Stahl D."/>
            <person name="Richardson P."/>
        </authorList>
    </citation>
    <scope>NUCLEOTIDE SEQUENCE [LARGE SCALE GENOMIC DNA]</scope>
    <source>
        <strain>JS42</strain>
    </source>
</reference>
<protein>
    <recommendedName>
        <fullName evidence="1">Fructose-1,6-bisphosphatase class 1</fullName>
        <shortName evidence="1">FBPase class 1</shortName>
        <ecNumber evidence="1">3.1.3.11</ecNumber>
    </recommendedName>
    <alternativeName>
        <fullName evidence="1">D-fructose-1,6-bisphosphate 1-phosphohydrolase class 1</fullName>
    </alternativeName>
</protein>
<keyword id="KW-0119">Carbohydrate metabolism</keyword>
<keyword id="KW-0963">Cytoplasm</keyword>
<keyword id="KW-0378">Hydrolase</keyword>
<keyword id="KW-0460">Magnesium</keyword>
<keyword id="KW-0479">Metal-binding</keyword>
<accession>A1W9H6</accession>